<name>LACK_RHIRD</name>
<protein>
    <recommendedName>
        <fullName>Lactose transport ATP-binding protein LacK</fullName>
    </recommendedName>
</protein>
<gene>
    <name type="primary">lacK</name>
</gene>
<sequence length="363" mass="39324">MAEVRLTDIRKSYGSLEVIKGVNLEVSSGEFVVFVGPSGCGKSTLLRMIAGLEDISSGELTIGGTVMNDVDPSKRGIAMVFQTYALYPHMTVRENMGFALRFAGMAKDEIERRVNAAAKILELDALMDRKPKALSGGQRQRVAIGRAIVRQPDVFLFDEPLSNLDAELRVHMRVEIARLHKELNATIVYVTHDQVEAMTLADKIVVMRGGIVEQVGAPLALYDDPDNMFVAGFIGSPRMNFLPAVVIGQAEGGQVTVALKARPDTQLTVACATPPQGGDAVTVGVRPEHFLPAGSGDTQLTAHVDVVEHLGNTSYVYAHTVPGEQIIIEQEERRHGGRYGDEIAVGISAKTSFLFDASGRRIR</sequence>
<organism>
    <name type="scientific">Rhizobium radiobacter</name>
    <name type="common">Agrobacterium tumefaciens</name>
    <name type="synonym">Agrobacterium radiobacter</name>
    <dbReference type="NCBI Taxonomy" id="358"/>
    <lineage>
        <taxon>Bacteria</taxon>
        <taxon>Pseudomonadati</taxon>
        <taxon>Pseudomonadota</taxon>
        <taxon>Alphaproteobacteria</taxon>
        <taxon>Hyphomicrobiales</taxon>
        <taxon>Rhizobiaceae</taxon>
        <taxon>Rhizobium/Agrobacterium group</taxon>
        <taxon>Agrobacterium</taxon>
        <taxon>Agrobacterium tumefaciens complex</taxon>
    </lineage>
</organism>
<accession>Q01937</accession>
<feature type="chain" id="PRO_0000092396" description="Lactose transport ATP-binding protein LacK">
    <location>
        <begin position="1"/>
        <end position="363"/>
    </location>
</feature>
<feature type="domain" description="ABC transporter" evidence="1">
    <location>
        <begin position="4"/>
        <end position="234"/>
    </location>
</feature>
<feature type="binding site" evidence="1">
    <location>
        <begin position="36"/>
        <end position="43"/>
    </location>
    <ligand>
        <name>ATP</name>
        <dbReference type="ChEBI" id="CHEBI:30616"/>
    </ligand>
</feature>
<proteinExistence type="inferred from homology"/>
<comment type="function">
    <text>Part of the binding-protein-dependent transport system for lactose. Probably responsible for energy coupling to the transport system.</text>
</comment>
<comment type="subcellular location">
    <subcellularLocation>
        <location>Cell inner membrane</location>
        <topology>Peripheral membrane protein</topology>
    </subcellularLocation>
</comment>
<comment type="similarity">
    <text evidence="2">Belongs to the ABC transporter superfamily.</text>
</comment>
<keyword id="KW-0067">ATP-binding</keyword>
<keyword id="KW-0997">Cell inner membrane</keyword>
<keyword id="KW-1003">Cell membrane</keyword>
<keyword id="KW-0472">Membrane</keyword>
<keyword id="KW-0547">Nucleotide-binding</keyword>
<keyword id="KW-0762">Sugar transport</keyword>
<keyword id="KW-0813">Transport</keyword>
<dbReference type="EMBL" id="X66596">
    <property type="status" value="NOT_ANNOTATED_CDS"/>
    <property type="molecule type" value="Genomic_DNA"/>
</dbReference>
<dbReference type="PIR" id="S34734">
    <property type="entry name" value="S34734"/>
</dbReference>
<dbReference type="SMR" id="Q01937"/>
<dbReference type="TCDB" id="3.A.1.1.4">
    <property type="family name" value="the atp-binding cassette (abc) superfamily"/>
</dbReference>
<dbReference type="GO" id="GO:0055052">
    <property type="term" value="C:ATP-binding cassette (ABC) transporter complex, substrate-binding subunit-containing"/>
    <property type="evidence" value="ECO:0007669"/>
    <property type="project" value="TreeGrafter"/>
</dbReference>
<dbReference type="GO" id="GO:1990060">
    <property type="term" value="C:maltose transport complex"/>
    <property type="evidence" value="ECO:0007669"/>
    <property type="project" value="TreeGrafter"/>
</dbReference>
<dbReference type="GO" id="GO:0015423">
    <property type="term" value="F:ABC-type maltose transporter activity"/>
    <property type="evidence" value="ECO:0007669"/>
    <property type="project" value="TreeGrafter"/>
</dbReference>
<dbReference type="GO" id="GO:0005524">
    <property type="term" value="F:ATP binding"/>
    <property type="evidence" value="ECO:0007669"/>
    <property type="project" value="UniProtKB-KW"/>
</dbReference>
<dbReference type="GO" id="GO:0016887">
    <property type="term" value="F:ATP hydrolysis activity"/>
    <property type="evidence" value="ECO:0007669"/>
    <property type="project" value="InterPro"/>
</dbReference>
<dbReference type="CDD" id="cd03301">
    <property type="entry name" value="ABC_MalK_N"/>
    <property type="match status" value="1"/>
</dbReference>
<dbReference type="FunFam" id="3.40.50.300:FF:000042">
    <property type="entry name" value="Maltose/maltodextrin ABC transporter, ATP-binding protein"/>
    <property type="match status" value="1"/>
</dbReference>
<dbReference type="Gene3D" id="2.40.50.100">
    <property type="match status" value="1"/>
</dbReference>
<dbReference type="Gene3D" id="2.40.50.140">
    <property type="entry name" value="Nucleic acid-binding proteins"/>
    <property type="match status" value="1"/>
</dbReference>
<dbReference type="Gene3D" id="3.40.50.300">
    <property type="entry name" value="P-loop containing nucleotide triphosphate hydrolases"/>
    <property type="match status" value="1"/>
</dbReference>
<dbReference type="InterPro" id="IPR003593">
    <property type="entry name" value="AAA+_ATPase"/>
</dbReference>
<dbReference type="InterPro" id="IPR003439">
    <property type="entry name" value="ABC_transporter-like_ATP-bd"/>
</dbReference>
<dbReference type="InterPro" id="IPR017871">
    <property type="entry name" value="ABC_transporter-like_CS"/>
</dbReference>
<dbReference type="InterPro" id="IPR015855">
    <property type="entry name" value="ABC_transpr_MalK-like"/>
</dbReference>
<dbReference type="InterPro" id="IPR047641">
    <property type="entry name" value="ABC_transpr_MalK/UgpC-like"/>
</dbReference>
<dbReference type="InterPro" id="IPR008995">
    <property type="entry name" value="Mo/tungstate-bd_C_term_dom"/>
</dbReference>
<dbReference type="InterPro" id="IPR012340">
    <property type="entry name" value="NA-bd_OB-fold"/>
</dbReference>
<dbReference type="InterPro" id="IPR040582">
    <property type="entry name" value="OB_MalK-like"/>
</dbReference>
<dbReference type="InterPro" id="IPR027417">
    <property type="entry name" value="P-loop_NTPase"/>
</dbReference>
<dbReference type="NCBIfam" id="NF008653">
    <property type="entry name" value="PRK11650.1"/>
    <property type="match status" value="1"/>
</dbReference>
<dbReference type="PANTHER" id="PTHR43875">
    <property type="entry name" value="MALTODEXTRIN IMPORT ATP-BINDING PROTEIN MSMX"/>
    <property type="match status" value="1"/>
</dbReference>
<dbReference type="PANTHER" id="PTHR43875:SF3">
    <property type="entry name" value="MALTOSE_MALTODEXTRIN IMPORT ATP-BINDING PROTEIN MALK"/>
    <property type="match status" value="1"/>
</dbReference>
<dbReference type="Pfam" id="PF00005">
    <property type="entry name" value="ABC_tran"/>
    <property type="match status" value="1"/>
</dbReference>
<dbReference type="Pfam" id="PF17912">
    <property type="entry name" value="OB_MalK"/>
    <property type="match status" value="1"/>
</dbReference>
<dbReference type="SMART" id="SM00382">
    <property type="entry name" value="AAA"/>
    <property type="match status" value="1"/>
</dbReference>
<dbReference type="SUPFAM" id="SSF50331">
    <property type="entry name" value="MOP-like"/>
    <property type="match status" value="1"/>
</dbReference>
<dbReference type="SUPFAM" id="SSF52540">
    <property type="entry name" value="P-loop containing nucleoside triphosphate hydrolases"/>
    <property type="match status" value="1"/>
</dbReference>
<dbReference type="PROSITE" id="PS00211">
    <property type="entry name" value="ABC_TRANSPORTER_1"/>
    <property type="match status" value="1"/>
</dbReference>
<dbReference type="PROSITE" id="PS50893">
    <property type="entry name" value="ABC_TRANSPORTER_2"/>
    <property type="match status" value="1"/>
</dbReference>
<evidence type="ECO:0000255" key="1">
    <source>
        <dbReference type="PROSITE-ProRule" id="PRU00434"/>
    </source>
</evidence>
<evidence type="ECO:0000305" key="2"/>
<reference key="1">
    <citation type="journal article" date="1992" name="Mol. Microbiol.">
        <title>Molecular analysis of the lac operon encoding the binding-protein-dependent lactose transport system and beta-galactosidase in Agrobacterium radiobacter.</title>
        <authorList>
            <person name="Williams S.G."/>
            <person name="Greenwood J.A."/>
            <person name="Jones C.W."/>
        </authorList>
    </citation>
    <scope>NUCLEOTIDE SEQUENCE [GENOMIC DNA]</scope>
    <source>
        <strain>AR50</strain>
    </source>
</reference>